<accession>Q9DAI2</accession>
<reference key="1">
    <citation type="journal article" date="2005" name="Science">
        <title>The transcriptional landscape of the mammalian genome.</title>
        <authorList>
            <person name="Carninci P."/>
            <person name="Kasukawa T."/>
            <person name="Katayama S."/>
            <person name="Gough J."/>
            <person name="Frith M.C."/>
            <person name="Maeda N."/>
            <person name="Oyama R."/>
            <person name="Ravasi T."/>
            <person name="Lenhard B."/>
            <person name="Wells C."/>
            <person name="Kodzius R."/>
            <person name="Shimokawa K."/>
            <person name="Bajic V.B."/>
            <person name="Brenner S.E."/>
            <person name="Batalov S."/>
            <person name="Forrest A.R."/>
            <person name="Zavolan M."/>
            <person name="Davis M.J."/>
            <person name="Wilming L.G."/>
            <person name="Aidinis V."/>
            <person name="Allen J.E."/>
            <person name="Ambesi-Impiombato A."/>
            <person name="Apweiler R."/>
            <person name="Aturaliya R.N."/>
            <person name="Bailey T.L."/>
            <person name="Bansal M."/>
            <person name="Baxter L."/>
            <person name="Beisel K.W."/>
            <person name="Bersano T."/>
            <person name="Bono H."/>
            <person name="Chalk A.M."/>
            <person name="Chiu K.P."/>
            <person name="Choudhary V."/>
            <person name="Christoffels A."/>
            <person name="Clutterbuck D.R."/>
            <person name="Crowe M.L."/>
            <person name="Dalla E."/>
            <person name="Dalrymple B.P."/>
            <person name="de Bono B."/>
            <person name="Della Gatta G."/>
            <person name="di Bernardo D."/>
            <person name="Down T."/>
            <person name="Engstrom P."/>
            <person name="Fagiolini M."/>
            <person name="Faulkner G."/>
            <person name="Fletcher C.F."/>
            <person name="Fukushima T."/>
            <person name="Furuno M."/>
            <person name="Futaki S."/>
            <person name="Gariboldi M."/>
            <person name="Georgii-Hemming P."/>
            <person name="Gingeras T.R."/>
            <person name="Gojobori T."/>
            <person name="Green R.E."/>
            <person name="Gustincich S."/>
            <person name="Harbers M."/>
            <person name="Hayashi Y."/>
            <person name="Hensch T.K."/>
            <person name="Hirokawa N."/>
            <person name="Hill D."/>
            <person name="Huminiecki L."/>
            <person name="Iacono M."/>
            <person name="Ikeo K."/>
            <person name="Iwama A."/>
            <person name="Ishikawa T."/>
            <person name="Jakt M."/>
            <person name="Kanapin A."/>
            <person name="Katoh M."/>
            <person name="Kawasawa Y."/>
            <person name="Kelso J."/>
            <person name="Kitamura H."/>
            <person name="Kitano H."/>
            <person name="Kollias G."/>
            <person name="Krishnan S.P."/>
            <person name="Kruger A."/>
            <person name="Kummerfeld S.K."/>
            <person name="Kurochkin I.V."/>
            <person name="Lareau L.F."/>
            <person name="Lazarevic D."/>
            <person name="Lipovich L."/>
            <person name="Liu J."/>
            <person name="Liuni S."/>
            <person name="McWilliam S."/>
            <person name="Madan Babu M."/>
            <person name="Madera M."/>
            <person name="Marchionni L."/>
            <person name="Matsuda H."/>
            <person name="Matsuzawa S."/>
            <person name="Miki H."/>
            <person name="Mignone F."/>
            <person name="Miyake S."/>
            <person name="Morris K."/>
            <person name="Mottagui-Tabar S."/>
            <person name="Mulder N."/>
            <person name="Nakano N."/>
            <person name="Nakauchi H."/>
            <person name="Ng P."/>
            <person name="Nilsson R."/>
            <person name="Nishiguchi S."/>
            <person name="Nishikawa S."/>
            <person name="Nori F."/>
            <person name="Ohara O."/>
            <person name="Okazaki Y."/>
            <person name="Orlando V."/>
            <person name="Pang K.C."/>
            <person name="Pavan W.J."/>
            <person name="Pavesi G."/>
            <person name="Pesole G."/>
            <person name="Petrovsky N."/>
            <person name="Piazza S."/>
            <person name="Reed J."/>
            <person name="Reid J.F."/>
            <person name="Ring B.Z."/>
            <person name="Ringwald M."/>
            <person name="Rost B."/>
            <person name="Ruan Y."/>
            <person name="Salzberg S.L."/>
            <person name="Sandelin A."/>
            <person name="Schneider C."/>
            <person name="Schoenbach C."/>
            <person name="Sekiguchi K."/>
            <person name="Semple C.A."/>
            <person name="Seno S."/>
            <person name="Sessa L."/>
            <person name="Sheng Y."/>
            <person name="Shibata Y."/>
            <person name="Shimada H."/>
            <person name="Shimada K."/>
            <person name="Silva D."/>
            <person name="Sinclair B."/>
            <person name="Sperling S."/>
            <person name="Stupka E."/>
            <person name="Sugiura K."/>
            <person name="Sultana R."/>
            <person name="Takenaka Y."/>
            <person name="Taki K."/>
            <person name="Tammoja K."/>
            <person name="Tan S.L."/>
            <person name="Tang S."/>
            <person name="Taylor M.S."/>
            <person name="Tegner J."/>
            <person name="Teichmann S.A."/>
            <person name="Ueda H.R."/>
            <person name="van Nimwegen E."/>
            <person name="Verardo R."/>
            <person name="Wei C.L."/>
            <person name="Yagi K."/>
            <person name="Yamanishi H."/>
            <person name="Zabarovsky E."/>
            <person name="Zhu S."/>
            <person name="Zimmer A."/>
            <person name="Hide W."/>
            <person name="Bult C."/>
            <person name="Grimmond S.M."/>
            <person name="Teasdale R.D."/>
            <person name="Liu E.T."/>
            <person name="Brusic V."/>
            <person name="Quackenbush J."/>
            <person name="Wahlestedt C."/>
            <person name="Mattick J.S."/>
            <person name="Hume D.A."/>
            <person name="Kai C."/>
            <person name="Sasaki D."/>
            <person name="Tomaru Y."/>
            <person name="Fukuda S."/>
            <person name="Kanamori-Katayama M."/>
            <person name="Suzuki M."/>
            <person name="Aoki J."/>
            <person name="Arakawa T."/>
            <person name="Iida J."/>
            <person name="Imamura K."/>
            <person name="Itoh M."/>
            <person name="Kato T."/>
            <person name="Kawaji H."/>
            <person name="Kawagashira N."/>
            <person name="Kawashima T."/>
            <person name="Kojima M."/>
            <person name="Kondo S."/>
            <person name="Konno H."/>
            <person name="Nakano K."/>
            <person name="Ninomiya N."/>
            <person name="Nishio T."/>
            <person name="Okada M."/>
            <person name="Plessy C."/>
            <person name="Shibata K."/>
            <person name="Shiraki T."/>
            <person name="Suzuki S."/>
            <person name="Tagami M."/>
            <person name="Waki K."/>
            <person name="Watahiki A."/>
            <person name="Okamura-Oho Y."/>
            <person name="Suzuki H."/>
            <person name="Kawai J."/>
            <person name="Hayashizaki Y."/>
        </authorList>
    </citation>
    <scope>NUCLEOTIDE SEQUENCE [LARGE SCALE MRNA]</scope>
    <source>
        <strain>C57BL/6J</strain>
        <tissue>Testis</tissue>
    </source>
</reference>
<reference key="2">
    <citation type="journal article" date="2004" name="Genome Res.">
        <title>The status, quality, and expansion of the NIH full-length cDNA project: the Mammalian Gene Collection (MGC).</title>
        <authorList>
            <consortium name="The MGC Project Team"/>
        </authorList>
    </citation>
    <scope>NUCLEOTIDE SEQUENCE [LARGE SCALE MRNA]</scope>
    <source>
        <strain>Czech II</strain>
        <tissue>Mammary tumor</tissue>
    </source>
</reference>
<reference key="3">
    <citation type="journal article" date="2009" name="Cell Motil. Cytoskeleton">
        <title>Characterization of mouse IFT complex B.</title>
        <authorList>
            <person name="Follit J.A."/>
            <person name="Xu F."/>
            <person name="Keady B.T."/>
            <person name="Pazour G.J."/>
        </authorList>
    </citation>
    <scope>FUNCTION</scope>
    <scope>IDENTIFICATION IN THE IFT COMPLEX B</scope>
    <scope>INTERACTION WITH IFT88</scope>
    <scope>SUBCELLULAR LOCATION</scope>
</reference>
<reference key="4">
    <citation type="journal article" date="2010" name="Cell">
        <title>A tissue-specific atlas of mouse protein phosphorylation and expression.</title>
        <authorList>
            <person name="Huttlin E.L."/>
            <person name="Jedrychowski M.P."/>
            <person name="Elias J.E."/>
            <person name="Goswami T."/>
            <person name="Rad R."/>
            <person name="Beausoleil S.A."/>
            <person name="Villen J."/>
            <person name="Haas W."/>
            <person name="Sowa M.E."/>
            <person name="Gygi S.P."/>
        </authorList>
    </citation>
    <scope>IDENTIFICATION BY MASS SPECTROMETRY [LARGE SCALE ANALYSIS]</scope>
    <source>
        <tissue>Brain</tissue>
        <tissue>Kidney</tissue>
        <tissue>Liver</tissue>
        <tissue>Lung</tissue>
        <tissue>Pancreas</tissue>
        <tissue>Spleen</tissue>
        <tissue>Testis</tissue>
    </source>
</reference>
<reference key="5">
    <citation type="journal article" date="2021" name="Development">
        <title>CFAP61 is required for sperm flagellum formation and male fertility in human and mouse.</title>
        <authorList>
            <person name="Liu S."/>
            <person name="Zhang J."/>
            <person name="Kherraf Z.E."/>
            <person name="Sun S."/>
            <person name="Zhang X."/>
            <person name="Cazin C."/>
            <person name="Coutton C."/>
            <person name="Zouari R."/>
            <person name="Zhao S."/>
            <person name="Hu F."/>
            <person name="Fourati Ben Mustapha S."/>
            <person name="Arnoult C."/>
            <person name="Ray P.F."/>
            <person name="Liu M."/>
        </authorList>
    </citation>
    <scope>INTERACTION WITH CFAP61</scope>
</reference>
<evidence type="ECO:0000250" key="1"/>
<evidence type="ECO:0000250" key="2">
    <source>
        <dbReference type="UniProtKB" id="Q9H7X7"/>
    </source>
</evidence>
<evidence type="ECO:0000269" key="3">
    <source>
    </source>
</evidence>
<evidence type="ECO:0000269" key="4">
    <source>
    </source>
</evidence>
<evidence type="ECO:0000305" key="5"/>
<sequence>MLKAKILFVGPCESGKTVLANFLTESSDITEYNPTQGVRILEFENPHVTSNNKGTGCEFELWDCGGDSKFESCWPALMKDAHGVVIVFNADIPSHLKEIEMWYSCFVQQQFLQDSHCMLVAHHKPGSGGERGSLALSPPLNKLKLVHSNLEEDPEEVRVEFIKYLKSIINSMSESRDREEMLIIT</sequence>
<dbReference type="EMBL" id="AK005820">
    <property type="protein sequence ID" value="BAB24256.1"/>
    <property type="molecule type" value="mRNA"/>
</dbReference>
<dbReference type="EMBL" id="BC009150">
    <property type="protein sequence ID" value="AAH09150.1"/>
    <property type="molecule type" value="mRNA"/>
</dbReference>
<dbReference type="CCDS" id="CCDS19756.1"/>
<dbReference type="RefSeq" id="NP_080349.1">
    <property type="nucleotide sequence ID" value="NM_026073.3"/>
</dbReference>
<dbReference type="SMR" id="Q9DAI2"/>
<dbReference type="BioGRID" id="212074">
    <property type="interactions" value="1"/>
</dbReference>
<dbReference type="ComplexPortal" id="CPX-5028">
    <property type="entry name" value="Intraflagellar transport complex B"/>
</dbReference>
<dbReference type="FunCoup" id="Q9DAI2">
    <property type="interactions" value="492"/>
</dbReference>
<dbReference type="IntAct" id="Q9DAI2">
    <property type="interactions" value="12"/>
</dbReference>
<dbReference type="STRING" id="10090.ENSMUSP00000143488"/>
<dbReference type="iPTMnet" id="Q9DAI2"/>
<dbReference type="PhosphoSitePlus" id="Q9DAI2"/>
<dbReference type="SwissPalm" id="Q9DAI2"/>
<dbReference type="REPRODUCTION-2DPAGE" id="IPI00118666"/>
<dbReference type="PaxDb" id="10090-ENSMUSP00000008131"/>
<dbReference type="PeptideAtlas" id="Q9DAI2"/>
<dbReference type="ProteomicsDB" id="267111"/>
<dbReference type="Pumba" id="Q9DAI2"/>
<dbReference type="Antibodypedia" id="31006">
    <property type="antibodies" value="66 antibodies from 18 providers"/>
</dbReference>
<dbReference type="DNASU" id="67286"/>
<dbReference type="Ensembl" id="ENSMUST00000200157.5">
    <property type="protein sequence ID" value="ENSMUSP00000143488.2"/>
    <property type="gene ID" value="ENSMUSG00000007987.13"/>
</dbReference>
<dbReference type="GeneID" id="67286"/>
<dbReference type="KEGG" id="mmu:67286"/>
<dbReference type="UCSC" id="uc009abc.1">
    <property type="organism name" value="mouse"/>
</dbReference>
<dbReference type="AGR" id="MGI:1914536"/>
<dbReference type="CTD" id="64792"/>
<dbReference type="MGI" id="MGI:1914536">
    <property type="gene designation" value="Ift22"/>
</dbReference>
<dbReference type="VEuPathDB" id="HostDB:ENSMUSG00000007987"/>
<dbReference type="eggNOG" id="ENOG502RXD4">
    <property type="taxonomic scope" value="Eukaryota"/>
</dbReference>
<dbReference type="GeneTree" id="ENSGT00390000013187"/>
<dbReference type="HOGENOM" id="CLU_096604_1_0_1"/>
<dbReference type="InParanoid" id="Q9DAI2"/>
<dbReference type="OMA" id="NERHDQE"/>
<dbReference type="OrthoDB" id="275177at2759"/>
<dbReference type="PhylomeDB" id="Q9DAI2"/>
<dbReference type="TreeFam" id="TF313208"/>
<dbReference type="Reactome" id="R-MMU-5620924">
    <property type="pathway name" value="Intraflagellar transport"/>
</dbReference>
<dbReference type="BioGRID-ORCS" id="67286">
    <property type="hits" value="1 hit in 77 CRISPR screens"/>
</dbReference>
<dbReference type="ChiTaRS" id="Ift22">
    <property type="organism name" value="mouse"/>
</dbReference>
<dbReference type="PRO" id="PR:Q9DAI2"/>
<dbReference type="Proteomes" id="UP000000589">
    <property type="component" value="Chromosome 5"/>
</dbReference>
<dbReference type="RNAct" id="Q9DAI2">
    <property type="molecule type" value="protein"/>
</dbReference>
<dbReference type="Bgee" id="ENSMUSG00000007987">
    <property type="expression patterns" value="Expressed in seminiferous tubule of testis and 250 other cell types or tissues"/>
</dbReference>
<dbReference type="ExpressionAtlas" id="Q9DAI2">
    <property type="expression patterns" value="baseline and differential"/>
</dbReference>
<dbReference type="GO" id="GO:0005813">
    <property type="term" value="C:centrosome"/>
    <property type="evidence" value="ECO:0000314"/>
    <property type="project" value="MGI"/>
</dbReference>
<dbReference type="GO" id="GO:0005929">
    <property type="term" value="C:cilium"/>
    <property type="evidence" value="ECO:0000314"/>
    <property type="project" value="MGI"/>
</dbReference>
<dbReference type="GO" id="GO:0030992">
    <property type="term" value="C:intraciliary transport particle B"/>
    <property type="evidence" value="ECO:0000314"/>
    <property type="project" value="UniProtKB"/>
</dbReference>
<dbReference type="GO" id="GO:0005525">
    <property type="term" value="F:GTP binding"/>
    <property type="evidence" value="ECO:0007669"/>
    <property type="project" value="UniProtKB-KW"/>
</dbReference>
<dbReference type="GO" id="GO:0060271">
    <property type="term" value="P:cilium assembly"/>
    <property type="evidence" value="ECO:0000303"/>
    <property type="project" value="ComplexPortal"/>
</dbReference>
<dbReference type="GO" id="GO:0035720">
    <property type="term" value="P:intraciliary anterograde transport"/>
    <property type="evidence" value="ECO:0000303"/>
    <property type="project" value="ComplexPortal"/>
</dbReference>
<dbReference type="GO" id="GO:0042073">
    <property type="term" value="P:intraciliary transport"/>
    <property type="evidence" value="ECO:0000305"/>
    <property type="project" value="MGI"/>
</dbReference>
<dbReference type="FunFam" id="3.40.50.300:FF:001100">
    <property type="entry name" value="intraflagellar transport protein 22 homolog"/>
    <property type="match status" value="1"/>
</dbReference>
<dbReference type="Gene3D" id="3.40.50.300">
    <property type="entry name" value="P-loop containing nucleotide triphosphate hydrolases"/>
    <property type="match status" value="1"/>
</dbReference>
<dbReference type="InterPro" id="IPR027417">
    <property type="entry name" value="P-loop_NTPase"/>
</dbReference>
<dbReference type="PANTHER" id="PTHR24073">
    <property type="entry name" value="DRAB5-RELATED"/>
    <property type="match status" value="1"/>
</dbReference>
<dbReference type="Pfam" id="PF08477">
    <property type="entry name" value="Roc"/>
    <property type="match status" value="1"/>
</dbReference>
<dbReference type="SUPFAM" id="SSF52540">
    <property type="entry name" value="P-loop containing nucleoside triphosphate hydrolases"/>
    <property type="match status" value="1"/>
</dbReference>
<name>IFT22_MOUSE</name>
<proteinExistence type="evidence at protein level"/>
<gene>
    <name type="primary">Ift22</name>
    <name type="synonym">Rabl5</name>
</gene>
<comment type="function">
    <text evidence="3">Small GTPase-like component of the intraflagellar transport (IFT) complex B.</text>
</comment>
<comment type="subunit">
    <text evidence="3 4">Component of the IFT complex B, at least composed of IFT20, IFT22, IFT25, IFT27, IFT46, IFT52, TRAF3IP1/IFT54, IFT57, IFT74, IFT80, IFT81, and IFT88. Interacts with IFT88. Interacts with CFAP61 (PubMed:34792097).</text>
</comment>
<comment type="subcellular location">
    <subcellularLocation>
        <location evidence="3">Cell projection</location>
        <location evidence="3">Cilium</location>
    </subcellularLocation>
</comment>
<comment type="similarity">
    <text evidence="5">Belongs to the small GTPase superfamily. Rab family.</text>
</comment>
<protein>
    <recommendedName>
        <fullName>Intraflagellar transport protein 22 homolog</fullName>
    </recommendedName>
    <alternativeName>
        <fullName>Rab-like protein 5</fullName>
    </alternativeName>
</protein>
<keyword id="KW-0966">Cell projection</keyword>
<keyword id="KW-0969">Cilium</keyword>
<keyword id="KW-0342">GTP-binding</keyword>
<keyword id="KW-0547">Nucleotide-binding</keyword>
<keyword id="KW-0597">Phosphoprotein</keyword>
<keyword id="KW-1185">Reference proteome</keyword>
<organism>
    <name type="scientific">Mus musculus</name>
    <name type="common">Mouse</name>
    <dbReference type="NCBI Taxonomy" id="10090"/>
    <lineage>
        <taxon>Eukaryota</taxon>
        <taxon>Metazoa</taxon>
        <taxon>Chordata</taxon>
        <taxon>Craniata</taxon>
        <taxon>Vertebrata</taxon>
        <taxon>Euteleostomi</taxon>
        <taxon>Mammalia</taxon>
        <taxon>Eutheria</taxon>
        <taxon>Euarchontoglires</taxon>
        <taxon>Glires</taxon>
        <taxon>Rodentia</taxon>
        <taxon>Myomorpha</taxon>
        <taxon>Muroidea</taxon>
        <taxon>Muridae</taxon>
        <taxon>Murinae</taxon>
        <taxon>Mus</taxon>
        <taxon>Mus</taxon>
    </lineage>
</organism>
<feature type="chain" id="PRO_0000253735" description="Intraflagellar transport protein 22 homolog">
    <location>
        <begin position="1"/>
        <end position="185"/>
    </location>
</feature>
<feature type="binding site" evidence="1">
    <location>
        <begin position="10"/>
        <end position="17"/>
    </location>
    <ligand>
        <name>GTP</name>
        <dbReference type="ChEBI" id="CHEBI:37565"/>
    </ligand>
</feature>
<feature type="binding site" evidence="1">
    <location>
        <begin position="63"/>
        <end position="67"/>
    </location>
    <ligand>
        <name>GTP</name>
        <dbReference type="ChEBI" id="CHEBI:37565"/>
    </ligand>
</feature>
<feature type="binding site" evidence="1">
    <location>
        <begin position="123"/>
        <end position="126"/>
    </location>
    <ligand>
        <name>GTP</name>
        <dbReference type="ChEBI" id="CHEBI:37565"/>
    </ligand>
</feature>
<feature type="modified residue" description="Phosphoserine" evidence="2">
    <location>
        <position position="137"/>
    </location>
</feature>